<accession>Q0KED8</accession>
<comment type="similarity">
    <text evidence="1">Belongs to the universal ribosomal protein uS9 family.</text>
</comment>
<protein>
    <recommendedName>
        <fullName evidence="1">Small ribosomal subunit protein uS9</fullName>
    </recommendedName>
    <alternativeName>
        <fullName evidence="2">30S ribosomal protein S9</fullName>
    </alternativeName>
</protein>
<dbReference type="EMBL" id="AM260479">
    <property type="protein sequence ID" value="CAJ91633.1"/>
    <property type="molecule type" value="Genomic_DNA"/>
</dbReference>
<dbReference type="RefSeq" id="WP_010813906.1">
    <property type="nucleotide sequence ID" value="NZ_CP039287.1"/>
</dbReference>
<dbReference type="SMR" id="Q0KED8"/>
<dbReference type="STRING" id="381666.H16_A0483"/>
<dbReference type="GeneID" id="34309940"/>
<dbReference type="KEGG" id="reh:H16_A0483"/>
<dbReference type="eggNOG" id="COG0103">
    <property type="taxonomic scope" value="Bacteria"/>
</dbReference>
<dbReference type="HOGENOM" id="CLU_046483_2_1_4"/>
<dbReference type="OrthoDB" id="9803965at2"/>
<dbReference type="Proteomes" id="UP000008210">
    <property type="component" value="Chromosome 1"/>
</dbReference>
<dbReference type="GO" id="GO:0022627">
    <property type="term" value="C:cytosolic small ribosomal subunit"/>
    <property type="evidence" value="ECO:0007669"/>
    <property type="project" value="TreeGrafter"/>
</dbReference>
<dbReference type="GO" id="GO:0003723">
    <property type="term" value="F:RNA binding"/>
    <property type="evidence" value="ECO:0007669"/>
    <property type="project" value="TreeGrafter"/>
</dbReference>
<dbReference type="GO" id="GO:0003735">
    <property type="term" value="F:structural constituent of ribosome"/>
    <property type="evidence" value="ECO:0007669"/>
    <property type="project" value="InterPro"/>
</dbReference>
<dbReference type="GO" id="GO:0006412">
    <property type="term" value="P:translation"/>
    <property type="evidence" value="ECO:0007669"/>
    <property type="project" value="UniProtKB-UniRule"/>
</dbReference>
<dbReference type="FunFam" id="3.30.230.10:FF:000001">
    <property type="entry name" value="30S ribosomal protein S9"/>
    <property type="match status" value="1"/>
</dbReference>
<dbReference type="Gene3D" id="3.30.230.10">
    <property type="match status" value="1"/>
</dbReference>
<dbReference type="HAMAP" id="MF_00532_B">
    <property type="entry name" value="Ribosomal_uS9_B"/>
    <property type="match status" value="1"/>
</dbReference>
<dbReference type="InterPro" id="IPR020568">
    <property type="entry name" value="Ribosomal_Su5_D2-typ_SF"/>
</dbReference>
<dbReference type="InterPro" id="IPR000754">
    <property type="entry name" value="Ribosomal_uS9"/>
</dbReference>
<dbReference type="InterPro" id="IPR023035">
    <property type="entry name" value="Ribosomal_uS9_bac/plastid"/>
</dbReference>
<dbReference type="InterPro" id="IPR020574">
    <property type="entry name" value="Ribosomal_uS9_CS"/>
</dbReference>
<dbReference type="InterPro" id="IPR014721">
    <property type="entry name" value="Ribsml_uS5_D2-typ_fold_subgr"/>
</dbReference>
<dbReference type="NCBIfam" id="NF001099">
    <property type="entry name" value="PRK00132.1"/>
    <property type="match status" value="1"/>
</dbReference>
<dbReference type="PANTHER" id="PTHR21569">
    <property type="entry name" value="RIBOSOMAL PROTEIN S9"/>
    <property type="match status" value="1"/>
</dbReference>
<dbReference type="PANTHER" id="PTHR21569:SF1">
    <property type="entry name" value="SMALL RIBOSOMAL SUBUNIT PROTEIN US9M"/>
    <property type="match status" value="1"/>
</dbReference>
<dbReference type="Pfam" id="PF00380">
    <property type="entry name" value="Ribosomal_S9"/>
    <property type="match status" value="1"/>
</dbReference>
<dbReference type="SUPFAM" id="SSF54211">
    <property type="entry name" value="Ribosomal protein S5 domain 2-like"/>
    <property type="match status" value="1"/>
</dbReference>
<dbReference type="PROSITE" id="PS00360">
    <property type="entry name" value="RIBOSOMAL_S9"/>
    <property type="match status" value="1"/>
</dbReference>
<keyword id="KW-1185">Reference proteome</keyword>
<keyword id="KW-0687">Ribonucleoprotein</keyword>
<keyword id="KW-0689">Ribosomal protein</keyword>
<gene>
    <name evidence="1" type="primary">rpsI</name>
    <name type="ordered locus">H16_A0483</name>
</gene>
<evidence type="ECO:0000255" key="1">
    <source>
        <dbReference type="HAMAP-Rule" id="MF_00532"/>
    </source>
</evidence>
<evidence type="ECO:0000305" key="2"/>
<reference key="1">
    <citation type="journal article" date="2006" name="Nat. Biotechnol.">
        <title>Genome sequence of the bioplastic-producing 'Knallgas' bacterium Ralstonia eutropha H16.</title>
        <authorList>
            <person name="Pohlmann A."/>
            <person name="Fricke W.F."/>
            <person name="Reinecke F."/>
            <person name="Kusian B."/>
            <person name="Liesegang H."/>
            <person name="Cramm R."/>
            <person name="Eitinger T."/>
            <person name="Ewering C."/>
            <person name="Poetter M."/>
            <person name="Schwartz E."/>
            <person name="Strittmatter A."/>
            <person name="Voss I."/>
            <person name="Gottschalk G."/>
            <person name="Steinbuechel A."/>
            <person name="Friedrich B."/>
            <person name="Bowien B."/>
        </authorList>
    </citation>
    <scope>NUCLEOTIDE SEQUENCE [LARGE SCALE GENOMIC DNA]</scope>
    <source>
        <strain>ATCC 17699 / DSM 428 / KCTC 22496 / NCIMB 10442 / H16 / Stanier 337</strain>
    </source>
</reference>
<feature type="chain" id="PRO_1000051300" description="Small ribosomal subunit protein uS9">
    <location>
        <begin position="1"/>
        <end position="130"/>
    </location>
</feature>
<sequence>MIGNWNYGTGRRKSAVARVFIKSGKGDIIVNGKPIKEYFARETSLMIVRQPLELTAHAETFDIKVNVTGGGETGQAGAVRHGITRALIDYDATLKSALSKAGYVTRDAREVERKKVGFHKARRRKQFSKR</sequence>
<organism>
    <name type="scientific">Cupriavidus necator (strain ATCC 17699 / DSM 428 / KCTC 22496 / NCIMB 10442 / H16 / Stanier 337)</name>
    <name type="common">Ralstonia eutropha</name>
    <dbReference type="NCBI Taxonomy" id="381666"/>
    <lineage>
        <taxon>Bacteria</taxon>
        <taxon>Pseudomonadati</taxon>
        <taxon>Pseudomonadota</taxon>
        <taxon>Betaproteobacteria</taxon>
        <taxon>Burkholderiales</taxon>
        <taxon>Burkholderiaceae</taxon>
        <taxon>Cupriavidus</taxon>
    </lineage>
</organism>
<proteinExistence type="inferred from homology"/>
<name>RS9_CUPNH</name>